<comment type="function">
    <text evidence="1">Catalyzes the methylthiolation of an aspartic acid residue of ribosomal protein uS12.</text>
</comment>
<comment type="catalytic activity">
    <reaction evidence="1">
        <text>L-aspartate(89)-[ribosomal protein uS12]-hydrogen + (sulfur carrier)-SH + AH2 + 2 S-adenosyl-L-methionine = 3-methylsulfanyl-L-aspartate(89)-[ribosomal protein uS12]-hydrogen + (sulfur carrier)-H + 5'-deoxyadenosine + L-methionine + A + S-adenosyl-L-homocysteine + 2 H(+)</text>
        <dbReference type="Rhea" id="RHEA:37087"/>
        <dbReference type="Rhea" id="RHEA-COMP:10460"/>
        <dbReference type="Rhea" id="RHEA-COMP:10461"/>
        <dbReference type="Rhea" id="RHEA-COMP:14737"/>
        <dbReference type="Rhea" id="RHEA-COMP:14739"/>
        <dbReference type="ChEBI" id="CHEBI:13193"/>
        <dbReference type="ChEBI" id="CHEBI:15378"/>
        <dbReference type="ChEBI" id="CHEBI:17319"/>
        <dbReference type="ChEBI" id="CHEBI:17499"/>
        <dbReference type="ChEBI" id="CHEBI:29917"/>
        <dbReference type="ChEBI" id="CHEBI:29961"/>
        <dbReference type="ChEBI" id="CHEBI:57844"/>
        <dbReference type="ChEBI" id="CHEBI:57856"/>
        <dbReference type="ChEBI" id="CHEBI:59789"/>
        <dbReference type="ChEBI" id="CHEBI:64428"/>
        <dbReference type="ChEBI" id="CHEBI:73599"/>
        <dbReference type="EC" id="2.8.4.4"/>
    </reaction>
</comment>
<comment type="cofactor">
    <cofactor evidence="1">
        <name>[4Fe-4S] cluster</name>
        <dbReference type="ChEBI" id="CHEBI:49883"/>
    </cofactor>
    <text evidence="1">Binds 2 [4Fe-4S] clusters. One cluster is coordinated with 3 cysteines and an exchangeable S-adenosyl-L-methionine.</text>
</comment>
<comment type="subcellular location">
    <subcellularLocation>
        <location evidence="1">Cytoplasm</location>
    </subcellularLocation>
</comment>
<comment type="similarity">
    <text evidence="1">Belongs to the methylthiotransferase family. RimO subfamily.</text>
</comment>
<evidence type="ECO:0000255" key="1">
    <source>
        <dbReference type="HAMAP-Rule" id="MF_01865"/>
    </source>
</evidence>
<evidence type="ECO:0000255" key="2">
    <source>
        <dbReference type="PROSITE-ProRule" id="PRU01266"/>
    </source>
</evidence>
<name>RIMO_DELAS</name>
<dbReference type="EC" id="2.8.4.4" evidence="1"/>
<dbReference type="EMBL" id="CP000884">
    <property type="protein sequence ID" value="ABX35505.1"/>
    <property type="molecule type" value="Genomic_DNA"/>
</dbReference>
<dbReference type="SMR" id="A9BVZ2"/>
<dbReference type="STRING" id="398578.Daci_2867"/>
<dbReference type="KEGG" id="dac:Daci_2867"/>
<dbReference type="eggNOG" id="COG0621">
    <property type="taxonomic scope" value="Bacteria"/>
</dbReference>
<dbReference type="HOGENOM" id="CLU_018697_0_0_4"/>
<dbReference type="Proteomes" id="UP000000784">
    <property type="component" value="Chromosome"/>
</dbReference>
<dbReference type="GO" id="GO:0005829">
    <property type="term" value="C:cytosol"/>
    <property type="evidence" value="ECO:0007669"/>
    <property type="project" value="TreeGrafter"/>
</dbReference>
<dbReference type="GO" id="GO:0051539">
    <property type="term" value="F:4 iron, 4 sulfur cluster binding"/>
    <property type="evidence" value="ECO:0007669"/>
    <property type="project" value="UniProtKB-UniRule"/>
</dbReference>
<dbReference type="GO" id="GO:0035599">
    <property type="term" value="F:aspartic acid methylthiotransferase activity"/>
    <property type="evidence" value="ECO:0007669"/>
    <property type="project" value="TreeGrafter"/>
</dbReference>
<dbReference type="GO" id="GO:0046872">
    <property type="term" value="F:metal ion binding"/>
    <property type="evidence" value="ECO:0007669"/>
    <property type="project" value="UniProtKB-KW"/>
</dbReference>
<dbReference type="GO" id="GO:0103039">
    <property type="term" value="F:protein methylthiotransferase activity"/>
    <property type="evidence" value="ECO:0007669"/>
    <property type="project" value="UniProtKB-EC"/>
</dbReference>
<dbReference type="GO" id="GO:0006400">
    <property type="term" value="P:tRNA modification"/>
    <property type="evidence" value="ECO:0007669"/>
    <property type="project" value="InterPro"/>
</dbReference>
<dbReference type="CDD" id="cd01335">
    <property type="entry name" value="Radical_SAM"/>
    <property type="match status" value="1"/>
</dbReference>
<dbReference type="FunFam" id="3.40.50.12160:FF:000002">
    <property type="entry name" value="Ribosomal protein S12 methylthiotransferase RimO"/>
    <property type="match status" value="1"/>
</dbReference>
<dbReference type="FunFam" id="3.80.30.20:FF:000001">
    <property type="entry name" value="tRNA-2-methylthio-N(6)-dimethylallyladenosine synthase 2"/>
    <property type="match status" value="1"/>
</dbReference>
<dbReference type="Gene3D" id="3.40.50.12160">
    <property type="entry name" value="Methylthiotransferase, N-terminal domain"/>
    <property type="match status" value="1"/>
</dbReference>
<dbReference type="Gene3D" id="2.40.50.140">
    <property type="entry name" value="Nucleic acid-binding proteins"/>
    <property type="match status" value="1"/>
</dbReference>
<dbReference type="Gene3D" id="3.80.30.20">
    <property type="entry name" value="tm_1862 like domain"/>
    <property type="match status" value="1"/>
</dbReference>
<dbReference type="HAMAP" id="MF_01865">
    <property type="entry name" value="MTTase_RimO"/>
    <property type="match status" value="1"/>
</dbReference>
<dbReference type="InterPro" id="IPR006638">
    <property type="entry name" value="Elp3/MiaA/NifB-like_rSAM"/>
</dbReference>
<dbReference type="InterPro" id="IPR005839">
    <property type="entry name" value="Methylthiotransferase"/>
</dbReference>
<dbReference type="InterPro" id="IPR020612">
    <property type="entry name" value="Methylthiotransferase_CS"/>
</dbReference>
<dbReference type="InterPro" id="IPR013848">
    <property type="entry name" value="Methylthiotransferase_N"/>
</dbReference>
<dbReference type="InterPro" id="IPR038135">
    <property type="entry name" value="Methylthiotransferase_N_sf"/>
</dbReference>
<dbReference type="InterPro" id="IPR012340">
    <property type="entry name" value="NA-bd_OB-fold"/>
</dbReference>
<dbReference type="InterPro" id="IPR005840">
    <property type="entry name" value="Ribosomal_uS12_MeSTrfase_RimO"/>
</dbReference>
<dbReference type="InterPro" id="IPR007197">
    <property type="entry name" value="rSAM"/>
</dbReference>
<dbReference type="InterPro" id="IPR023404">
    <property type="entry name" value="rSAM_horseshoe"/>
</dbReference>
<dbReference type="InterPro" id="IPR002792">
    <property type="entry name" value="TRAM_dom"/>
</dbReference>
<dbReference type="NCBIfam" id="TIGR01125">
    <property type="entry name" value="30S ribosomal protein S12 methylthiotransferase RimO"/>
    <property type="match status" value="1"/>
</dbReference>
<dbReference type="NCBIfam" id="TIGR00089">
    <property type="entry name" value="MiaB/RimO family radical SAM methylthiotransferase"/>
    <property type="match status" value="1"/>
</dbReference>
<dbReference type="PANTHER" id="PTHR43837">
    <property type="entry name" value="RIBOSOMAL PROTEIN S12 METHYLTHIOTRANSFERASE RIMO"/>
    <property type="match status" value="1"/>
</dbReference>
<dbReference type="PANTHER" id="PTHR43837:SF1">
    <property type="entry name" value="RIBOSOMAL PROTEIN US12 METHYLTHIOTRANSFERASE RIMO"/>
    <property type="match status" value="1"/>
</dbReference>
<dbReference type="Pfam" id="PF04055">
    <property type="entry name" value="Radical_SAM"/>
    <property type="match status" value="1"/>
</dbReference>
<dbReference type="Pfam" id="PF18693">
    <property type="entry name" value="TRAM_2"/>
    <property type="match status" value="1"/>
</dbReference>
<dbReference type="Pfam" id="PF00919">
    <property type="entry name" value="UPF0004"/>
    <property type="match status" value="1"/>
</dbReference>
<dbReference type="SFLD" id="SFLDG01082">
    <property type="entry name" value="B12-binding_domain_containing"/>
    <property type="match status" value="1"/>
</dbReference>
<dbReference type="SFLD" id="SFLDG01061">
    <property type="entry name" value="methylthiotransferase"/>
    <property type="match status" value="1"/>
</dbReference>
<dbReference type="SFLD" id="SFLDF00274">
    <property type="entry name" value="ribosomal_protein_S12_methylth"/>
    <property type="match status" value="1"/>
</dbReference>
<dbReference type="SMART" id="SM00729">
    <property type="entry name" value="Elp3"/>
    <property type="match status" value="1"/>
</dbReference>
<dbReference type="SUPFAM" id="SSF102114">
    <property type="entry name" value="Radical SAM enzymes"/>
    <property type="match status" value="1"/>
</dbReference>
<dbReference type="PROSITE" id="PS51449">
    <property type="entry name" value="MTTASE_N"/>
    <property type="match status" value="1"/>
</dbReference>
<dbReference type="PROSITE" id="PS01278">
    <property type="entry name" value="MTTASE_RADICAL"/>
    <property type="match status" value="1"/>
</dbReference>
<dbReference type="PROSITE" id="PS51918">
    <property type="entry name" value="RADICAL_SAM"/>
    <property type="match status" value="1"/>
</dbReference>
<dbReference type="PROSITE" id="PS50926">
    <property type="entry name" value="TRAM"/>
    <property type="match status" value="1"/>
</dbReference>
<protein>
    <recommendedName>
        <fullName evidence="1">Ribosomal protein uS12 methylthiotransferase RimO</fullName>
        <shortName evidence="1">uS12 MTTase</shortName>
        <shortName evidence="1">uS12 methylthiotransferase</shortName>
        <ecNumber evidence="1">2.8.4.4</ecNumber>
    </recommendedName>
    <alternativeName>
        <fullName evidence="1">Ribosomal protein uS12 (aspartate-C(3))-methylthiotransferase</fullName>
    </alternativeName>
    <alternativeName>
        <fullName evidence="1">Ribosome maturation factor RimO</fullName>
    </alternativeName>
</protein>
<proteinExistence type="inferred from homology"/>
<organism>
    <name type="scientific">Delftia acidovorans (strain DSM 14801 / SPH-1)</name>
    <dbReference type="NCBI Taxonomy" id="398578"/>
    <lineage>
        <taxon>Bacteria</taxon>
        <taxon>Pseudomonadati</taxon>
        <taxon>Pseudomonadota</taxon>
        <taxon>Betaproteobacteria</taxon>
        <taxon>Burkholderiales</taxon>
        <taxon>Comamonadaceae</taxon>
        <taxon>Delftia</taxon>
    </lineage>
</organism>
<feature type="chain" id="PRO_0000374801" description="Ribosomal protein uS12 methylthiotransferase RimO">
    <location>
        <begin position="1"/>
        <end position="471"/>
    </location>
</feature>
<feature type="domain" description="MTTase N-terminal" evidence="1">
    <location>
        <begin position="19"/>
        <end position="134"/>
    </location>
</feature>
<feature type="domain" description="Radical SAM core" evidence="2">
    <location>
        <begin position="155"/>
        <end position="396"/>
    </location>
</feature>
<feature type="domain" description="TRAM" evidence="1">
    <location>
        <begin position="399"/>
        <end position="471"/>
    </location>
</feature>
<feature type="binding site" evidence="1">
    <location>
        <position position="28"/>
    </location>
    <ligand>
        <name>[4Fe-4S] cluster</name>
        <dbReference type="ChEBI" id="CHEBI:49883"/>
        <label>1</label>
    </ligand>
</feature>
<feature type="binding site" evidence="1">
    <location>
        <position position="64"/>
    </location>
    <ligand>
        <name>[4Fe-4S] cluster</name>
        <dbReference type="ChEBI" id="CHEBI:49883"/>
        <label>1</label>
    </ligand>
</feature>
<feature type="binding site" evidence="1">
    <location>
        <position position="93"/>
    </location>
    <ligand>
        <name>[4Fe-4S] cluster</name>
        <dbReference type="ChEBI" id="CHEBI:49883"/>
        <label>1</label>
    </ligand>
</feature>
<feature type="binding site" evidence="1">
    <location>
        <position position="169"/>
    </location>
    <ligand>
        <name>[4Fe-4S] cluster</name>
        <dbReference type="ChEBI" id="CHEBI:49883"/>
        <label>2</label>
        <note>4Fe-4S-S-AdoMet</note>
    </ligand>
</feature>
<feature type="binding site" evidence="1">
    <location>
        <position position="173"/>
    </location>
    <ligand>
        <name>[4Fe-4S] cluster</name>
        <dbReference type="ChEBI" id="CHEBI:49883"/>
        <label>2</label>
        <note>4Fe-4S-S-AdoMet</note>
    </ligand>
</feature>
<feature type="binding site" evidence="1">
    <location>
        <position position="176"/>
    </location>
    <ligand>
        <name>[4Fe-4S] cluster</name>
        <dbReference type="ChEBI" id="CHEBI:49883"/>
        <label>2</label>
        <note>4Fe-4S-S-AdoMet</note>
    </ligand>
</feature>
<sequence>MTPTSDATTMTTPAGAAAPRVGFVSLGCPKALTDSELILTQLSAEGYQTSKTFEGADLVIVNTCGFIDDAVRESLDTIGEALAENGKVIVTGCLGAKAGKDGGNLIQEVHPSVLAVTGPHATQEVMNAVHTHLPKPHDPFIDLVPGAFGEAGIKLTPRHYAYLKISEGCNHRCTFCIIPSMRGDLVSRPVGDVLKEARALFEGGVKELLVISQDTSAYGVDVKYRTGFWDGKPVKTRMLELVQTLAEIAEPYGAWVRLHYVYPYPSVDEIIPFMATGRVLPYLDVPFQHSHPDVLKRMKRPANGERNLERLQRWREICPDLVIRSTFIAGFPGETEQEFEHLLQFLREAQIDRAGCFAYSPVEGAAANEIPGMLPLEVREERRARFMAVAEEVSTARLQKRVGQTMQVLVDKSVGLGKKGGVGRSYADAPEIDGLVHLLPPEKASKTYKVGDFVKARIVGTQGHDLVGQPV</sequence>
<keyword id="KW-0004">4Fe-4S</keyword>
<keyword id="KW-0963">Cytoplasm</keyword>
<keyword id="KW-0408">Iron</keyword>
<keyword id="KW-0411">Iron-sulfur</keyword>
<keyword id="KW-0479">Metal-binding</keyword>
<keyword id="KW-1185">Reference proteome</keyword>
<keyword id="KW-0949">S-adenosyl-L-methionine</keyword>
<keyword id="KW-0808">Transferase</keyword>
<accession>A9BVZ2</accession>
<gene>
    <name evidence="1" type="primary">rimO</name>
    <name type="ordered locus">Daci_2867</name>
</gene>
<reference key="1">
    <citation type="submission" date="2007-11" db="EMBL/GenBank/DDBJ databases">
        <title>Complete sequence of Delftia acidovorans DSM 14801 / SPH-1.</title>
        <authorList>
            <person name="Copeland A."/>
            <person name="Lucas S."/>
            <person name="Lapidus A."/>
            <person name="Barry K."/>
            <person name="Glavina del Rio T."/>
            <person name="Dalin E."/>
            <person name="Tice H."/>
            <person name="Pitluck S."/>
            <person name="Lowry S."/>
            <person name="Clum A."/>
            <person name="Schmutz J."/>
            <person name="Larimer F."/>
            <person name="Land M."/>
            <person name="Hauser L."/>
            <person name="Kyrpides N."/>
            <person name="Kim E."/>
            <person name="Schleheck D."/>
            <person name="Richardson P."/>
        </authorList>
    </citation>
    <scope>NUCLEOTIDE SEQUENCE [LARGE SCALE GENOMIC DNA]</scope>
    <source>
        <strain>DSM 14801 / SPH-1</strain>
    </source>
</reference>